<gene>
    <name evidence="1" type="primary">rimK1</name>
    <name type="ordered locus">Sden_2398</name>
</gene>
<name>RIMK1_SHEDO</name>
<evidence type="ECO:0000255" key="1">
    <source>
        <dbReference type="HAMAP-Rule" id="MF_01552"/>
    </source>
</evidence>
<evidence type="ECO:0000305" key="2"/>
<sequence>MRIAILSQGPQLYSTKRLVEAAQARGHDVHIINPLKCYMNINMRQPSIHIAGKELPQFDAVIPRIGASITFYGSAVLRQFEMMGVYTINDSVGISRSRDKLRSMQLLSRKGIGLPITGFANKPSDIPDLIDMVGGAPLVVKLLEGTQGIGVVLAETRKAAESVLEAFMGLKANIMVQEYIKEANGADIRCFVLGDKVIAAMKRQAKAGEFRSNLHRGGTATLVKLSPEERTTAIRAAKTMGLSLAGVDLLRSNHGPVVMEVNSSPGLEGIEAATQKDVANAIIEFIEKNANKAKS</sequence>
<organism>
    <name type="scientific">Shewanella denitrificans (strain OS217 / ATCC BAA-1090 / DSM 15013)</name>
    <dbReference type="NCBI Taxonomy" id="318161"/>
    <lineage>
        <taxon>Bacteria</taxon>
        <taxon>Pseudomonadati</taxon>
        <taxon>Pseudomonadota</taxon>
        <taxon>Gammaproteobacteria</taxon>
        <taxon>Alteromonadales</taxon>
        <taxon>Shewanellaceae</taxon>
        <taxon>Shewanella</taxon>
    </lineage>
</organism>
<dbReference type="EC" id="6.3.2.-" evidence="1"/>
<dbReference type="EMBL" id="CP000302">
    <property type="protein sequence ID" value="ABE55678.1"/>
    <property type="status" value="ALT_INIT"/>
    <property type="molecule type" value="Genomic_DNA"/>
</dbReference>
<dbReference type="RefSeq" id="WP_041406327.1">
    <property type="nucleotide sequence ID" value="NC_007954.1"/>
</dbReference>
<dbReference type="SMR" id="Q12LJ8"/>
<dbReference type="STRING" id="318161.Sden_2398"/>
<dbReference type="KEGG" id="sdn:Sden_2398"/>
<dbReference type="eggNOG" id="COG0189">
    <property type="taxonomic scope" value="Bacteria"/>
</dbReference>
<dbReference type="HOGENOM" id="CLU_054353_0_1_6"/>
<dbReference type="OrthoDB" id="3865600at2"/>
<dbReference type="Proteomes" id="UP000001982">
    <property type="component" value="Chromosome"/>
</dbReference>
<dbReference type="GO" id="GO:0005737">
    <property type="term" value="C:cytoplasm"/>
    <property type="evidence" value="ECO:0007669"/>
    <property type="project" value="TreeGrafter"/>
</dbReference>
<dbReference type="GO" id="GO:0005524">
    <property type="term" value="F:ATP binding"/>
    <property type="evidence" value="ECO:0007669"/>
    <property type="project" value="UniProtKB-UniRule"/>
</dbReference>
<dbReference type="GO" id="GO:0046872">
    <property type="term" value="F:metal ion binding"/>
    <property type="evidence" value="ECO:0007669"/>
    <property type="project" value="UniProtKB-KW"/>
</dbReference>
<dbReference type="GO" id="GO:0018169">
    <property type="term" value="F:ribosomal S6-glutamic acid ligase activity"/>
    <property type="evidence" value="ECO:0007669"/>
    <property type="project" value="TreeGrafter"/>
</dbReference>
<dbReference type="GO" id="GO:0036211">
    <property type="term" value="P:protein modification process"/>
    <property type="evidence" value="ECO:0007669"/>
    <property type="project" value="InterPro"/>
</dbReference>
<dbReference type="GO" id="GO:0009432">
    <property type="term" value="P:SOS response"/>
    <property type="evidence" value="ECO:0007669"/>
    <property type="project" value="TreeGrafter"/>
</dbReference>
<dbReference type="GO" id="GO:0006412">
    <property type="term" value="P:translation"/>
    <property type="evidence" value="ECO:0007669"/>
    <property type="project" value="UniProtKB-KW"/>
</dbReference>
<dbReference type="FunFam" id="3.40.50.20:FF:000004">
    <property type="entry name" value="Probable alpha-L-glutamate ligase"/>
    <property type="match status" value="1"/>
</dbReference>
<dbReference type="FunFam" id="3.30.1490.20:FF:000005">
    <property type="entry name" value="Probable alpha-L-glutamate ligase 1"/>
    <property type="match status" value="1"/>
</dbReference>
<dbReference type="FunFam" id="3.30.470.20:FF:000016">
    <property type="entry name" value="Ribosomal protein S6--L-glutamate ligase"/>
    <property type="match status" value="1"/>
</dbReference>
<dbReference type="Gene3D" id="3.40.50.20">
    <property type="match status" value="1"/>
</dbReference>
<dbReference type="Gene3D" id="3.30.1490.20">
    <property type="entry name" value="ATP-grasp fold, A domain"/>
    <property type="match status" value="1"/>
</dbReference>
<dbReference type="Gene3D" id="3.30.470.20">
    <property type="entry name" value="ATP-grasp fold, B domain"/>
    <property type="match status" value="1"/>
</dbReference>
<dbReference type="HAMAP" id="MF_01552">
    <property type="entry name" value="RimK"/>
    <property type="match status" value="1"/>
</dbReference>
<dbReference type="InterPro" id="IPR011761">
    <property type="entry name" value="ATP-grasp"/>
</dbReference>
<dbReference type="InterPro" id="IPR013651">
    <property type="entry name" value="ATP-grasp_RimK-type"/>
</dbReference>
<dbReference type="InterPro" id="IPR013815">
    <property type="entry name" value="ATP_grasp_subdomain_1"/>
</dbReference>
<dbReference type="InterPro" id="IPR023533">
    <property type="entry name" value="RimK"/>
</dbReference>
<dbReference type="InterPro" id="IPR041107">
    <property type="entry name" value="Rimk_N"/>
</dbReference>
<dbReference type="InterPro" id="IPR004666">
    <property type="entry name" value="Rp_bS6_RimK/Lys_biosynth_LsyX"/>
</dbReference>
<dbReference type="NCBIfam" id="NF007764">
    <property type="entry name" value="PRK10446.1"/>
    <property type="match status" value="1"/>
</dbReference>
<dbReference type="NCBIfam" id="TIGR00768">
    <property type="entry name" value="rimK_fam"/>
    <property type="match status" value="1"/>
</dbReference>
<dbReference type="PANTHER" id="PTHR21621:SF7">
    <property type="entry name" value="RIBOSOMAL PROTEIN BS6--L-GLUTAMATE LIGASE"/>
    <property type="match status" value="1"/>
</dbReference>
<dbReference type="PANTHER" id="PTHR21621">
    <property type="entry name" value="RIBOSOMAL PROTEIN S6 MODIFICATION PROTEIN"/>
    <property type="match status" value="1"/>
</dbReference>
<dbReference type="Pfam" id="PF08443">
    <property type="entry name" value="RimK"/>
    <property type="match status" value="1"/>
</dbReference>
<dbReference type="Pfam" id="PF18030">
    <property type="entry name" value="Rimk_N"/>
    <property type="match status" value="1"/>
</dbReference>
<dbReference type="SUPFAM" id="SSF56059">
    <property type="entry name" value="Glutathione synthetase ATP-binding domain-like"/>
    <property type="match status" value="1"/>
</dbReference>
<dbReference type="PROSITE" id="PS50975">
    <property type="entry name" value="ATP_GRASP"/>
    <property type="match status" value="1"/>
</dbReference>
<comment type="cofactor">
    <cofactor evidence="1">
        <name>Mg(2+)</name>
        <dbReference type="ChEBI" id="CHEBI:18420"/>
    </cofactor>
    <cofactor evidence="1">
        <name>Mn(2+)</name>
        <dbReference type="ChEBI" id="CHEBI:29035"/>
    </cofactor>
    <text evidence="1">Binds 2 magnesium or manganese ions per subunit.</text>
</comment>
<comment type="similarity">
    <text evidence="1">Belongs to the RimK family.</text>
</comment>
<comment type="sequence caution" evidence="2">
    <conflict type="erroneous initiation">
        <sequence resource="EMBL-CDS" id="ABE55678"/>
    </conflict>
</comment>
<accession>Q12LJ8</accession>
<feature type="chain" id="PRO_0000340554" description="Probable alpha-L-glutamate ligase 1">
    <location>
        <begin position="1"/>
        <end position="295"/>
    </location>
</feature>
<feature type="domain" description="ATP-grasp" evidence="1">
    <location>
        <begin position="104"/>
        <end position="287"/>
    </location>
</feature>
<feature type="binding site" evidence="1">
    <location>
        <position position="141"/>
    </location>
    <ligand>
        <name>ATP</name>
        <dbReference type="ChEBI" id="CHEBI:30616"/>
    </ligand>
</feature>
<feature type="binding site" evidence="1">
    <location>
        <begin position="178"/>
        <end position="179"/>
    </location>
    <ligand>
        <name>ATP</name>
        <dbReference type="ChEBI" id="CHEBI:30616"/>
    </ligand>
</feature>
<feature type="binding site" evidence="1">
    <location>
        <position position="187"/>
    </location>
    <ligand>
        <name>ATP</name>
        <dbReference type="ChEBI" id="CHEBI:30616"/>
    </ligand>
</feature>
<feature type="binding site" evidence="1">
    <location>
        <begin position="211"/>
        <end position="213"/>
    </location>
    <ligand>
        <name>ATP</name>
        <dbReference type="ChEBI" id="CHEBI:30616"/>
    </ligand>
</feature>
<feature type="binding site" evidence="1">
    <location>
        <position position="248"/>
    </location>
    <ligand>
        <name>Mg(2+)</name>
        <dbReference type="ChEBI" id="CHEBI:18420"/>
        <label>1</label>
    </ligand>
</feature>
<feature type="binding site" evidence="1">
    <location>
        <position position="248"/>
    </location>
    <ligand>
        <name>Mn(2+)</name>
        <dbReference type="ChEBI" id="CHEBI:29035"/>
        <label>1</label>
    </ligand>
</feature>
<feature type="binding site" evidence="1">
    <location>
        <position position="260"/>
    </location>
    <ligand>
        <name>Mg(2+)</name>
        <dbReference type="ChEBI" id="CHEBI:18420"/>
        <label>1</label>
    </ligand>
</feature>
<feature type="binding site" evidence="1">
    <location>
        <position position="260"/>
    </location>
    <ligand>
        <name>Mg(2+)</name>
        <dbReference type="ChEBI" id="CHEBI:18420"/>
        <label>2</label>
    </ligand>
</feature>
<feature type="binding site" evidence="1">
    <location>
        <position position="260"/>
    </location>
    <ligand>
        <name>Mn(2+)</name>
        <dbReference type="ChEBI" id="CHEBI:29035"/>
        <label>1</label>
    </ligand>
</feature>
<feature type="binding site" evidence="1">
    <location>
        <position position="260"/>
    </location>
    <ligand>
        <name>Mn(2+)</name>
        <dbReference type="ChEBI" id="CHEBI:29035"/>
        <label>2</label>
    </ligand>
</feature>
<feature type="binding site" evidence="1">
    <location>
        <position position="262"/>
    </location>
    <ligand>
        <name>Mg(2+)</name>
        <dbReference type="ChEBI" id="CHEBI:18420"/>
        <label>2</label>
    </ligand>
</feature>
<feature type="binding site" evidence="1">
    <location>
        <position position="262"/>
    </location>
    <ligand>
        <name>Mn(2+)</name>
        <dbReference type="ChEBI" id="CHEBI:29035"/>
        <label>2</label>
    </ligand>
</feature>
<protein>
    <recommendedName>
        <fullName evidence="1">Probable alpha-L-glutamate ligase 1</fullName>
        <ecNumber evidence="1">6.3.2.-</ecNumber>
    </recommendedName>
</protein>
<reference key="1">
    <citation type="submission" date="2006-03" db="EMBL/GenBank/DDBJ databases">
        <title>Complete sequence of Shewanella denitrificans OS217.</title>
        <authorList>
            <consortium name="US DOE Joint Genome Institute"/>
            <person name="Copeland A."/>
            <person name="Lucas S."/>
            <person name="Lapidus A."/>
            <person name="Barry K."/>
            <person name="Detter J.C."/>
            <person name="Glavina del Rio T."/>
            <person name="Hammon N."/>
            <person name="Israni S."/>
            <person name="Dalin E."/>
            <person name="Tice H."/>
            <person name="Pitluck S."/>
            <person name="Brettin T."/>
            <person name="Bruce D."/>
            <person name="Han C."/>
            <person name="Tapia R."/>
            <person name="Gilna P."/>
            <person name="Kiss H."/>
            <person name="Schmutz J."/>
            <person name="Larimer F."/>
            <person name="Land M."/>
            <person name="Hauser L."/>
            <person name="Kyrpides N."/>
            <person name="Lykidis A."/>
            <person name="Richardson P."/>
        </authorList>
    </citation>
    <scope>NUCLEOTIDE SEQUENCE [LARGE SCALE GENOMIC DNA]</scope>
    <source>
        <strain>OS217 / ATCC BAA-1090 / DSM 15013</strain>
    </source>
</reference>
<proteinExistence type="inferred from homology"/>
<keyword id="KW-0067">ATP-binding</keyword>
<keyword id="KW-0436">Ligase</keyword>
<keyword id="KW-0460">Magnesium</keyword>
<keyword id="KW-0464">Manganese</keyword>
<keyword id="KW-0479">Metal-binding</keyword>
<keyword id="KW-0547">Nucleotide-binding</keyword>
<keyword id="KW-0648">Protein biosynthesis</keyword>
<keyword id="KW-1185">Reference proteome</keyword>